<sequence length="670" mass="74016">MNTVVGRRIINGRRRPRRQTRRAQRPQPVVVVQTSRATQRRPRRRRRGNNRTGRTVPTRGAGSSETFVFSKDNLAGSSSGAITFGPSLSDCPAFSNGMLKAYHEYKISMVILEFVSEASSQNSGSIAYELDPHCKLNSLSSTINKFGITKPGKRAFTASYINGTEWHDVAEDQFRILYKGNGSSSIAGSFRITIKCQFHNPKYVDEEPGPSPGPSPSPQPTPQKKYRFIVYTGVPVTRIMAQSTDDAISLYDMPSQRFRYIEDENMNWTNLDSRWYSQNSLKAIPMIIVPVPQGEWTVEISMEGYQPTSSTTDPNKDKQDGLIAYNDDLSEGWNVGIYNNVEITNNKADNTLKYGHPDMELNGCHFNQGQCLERDGDLTCHIKTTGDNASFFVVGPAVQKQSKYNYAVSYGAWTDRMMEIGMIAIALDEQGSSGSVKTERPKRVGHSMAVSTWETIKLPEKGNSEGYETSQRQDSKTPPTASGGSDTLDVEEGGLPLPVEEEIPDFVGDNPWSDLSTKNSQEEEAMSSESGLRPQLKPPGLPKPQPIRTIRNFDPTPDLVEAWRPDVNPGYSKADVAAATIIAGGSIKDGRSMIDKRNKAVLDGRKSWGSSLASSLTGGTLKASAKSEKLAKLTTSERARYERIKRQQGSTRASEFLESLLAGEDPDSRF</sequence>
<keyword id="KW-0002">3D-structure</keyword>
<keyword id="KW-0167">Capsid protein</keyword>
<keyword id="KW-1031">Host cell junction</keyword>
<keyword id="KW-1049">Host periplasm</keyword>
<keyword id="KW-1185">Reference proteome</keyword>
<keyword id="KW-1159">RNA suppression of termination</keyword>
<keyword id="KW-0946">Virion</keyword>
<reference key="1">
    <citation type="journal article" date="1988" name="Nucleic Acids Res.">
        <title>Nucleotide sequence of beet western yellows virus RNA.</title>
        <authorList>
            <person name="Veidt I."/>
            <person name="Lot H."/>
            <person name="Leiser M."/>
            <person name="Scheidecker D."/>
            <person name="Guilley H."/>
            <person name="Richards K.E."/>
            <person name="Jonard G."/>
        </authorList>
    </citation>
    <scope>NUCLEOTIDE SEQUENCE [GENOMIC RNA]</scope>
</reference>
<reference key="2">
    <citation type="journal article" date="1995" name="EMBO J.">
        <title>Aphid transmission of beet western yellows luteovirus requires the minor capsid read-through protein P74.</title>
        <authorList>
            <person name="Brault V."/>
            <person name="van den Heuvel J.F."/>
            <person name="Verbeek M."/>
            <person name="Ziegler-Graff V."/>
            <person name="Reutenauer A."/>
            <person name="Herrbach E."/>
            <person name="Garaud J.-C."/>
            <person name="Guilley H."/>
            <person name="Richards K.E."/>
            <person name="Jonard G."/>
        </authorList>
    </citation>
    <scope>FUNCTION (MINOR CAPSID READTHROUGH PROTEIN)</scope>
</reference>
<reference key="3">
    <citation type="journal article" date="1997" name="Virology">
        <title>Effects of mutations in the beet western yellows virus readthrough protein on its expression and packaging and on virus accumulation, symptoms, and aphid transmission.</title>
        <authorList>
            <person name="Bruyere A."/>
            <person name="Brault V."/>
            <person name="Ziegler-Graff V."/>
            <person name="Simonis M.T."/>
            <person name="Van den Heuvel J.F."/>
            <person name="Richards K."/>
            <person name="Guilley H."/>
            <person name="Jonard G."/>
            <person name="Herrbach E."/>
        </authorList>
    </citation>
    <scope>DOMAIN (READTHROUGH PROTEIN P3-RTD)</scope>
</reference>
<reference key="4">
    <citation type="journal article" date="2000" name="J. Virol.">
        <title>Effects of point mutations in the readthrough domain of the beet western yellows virus minor capsid protein on virus accumulation in planta and on transmission by aphids.</title>
        <authorList>
            <person name="Brault V."/>
            <person name="Mutterer J."/>
            <person name="Scheidecker D."/>
            <person name="Simonis M.T."/>
            <person name="Herrbach E."/>
            <person name="Richards K.E."/>
            <person name="Ziegler-Graff V."/>
        </authorList>
    </citation>
    <scope>MUTAGENESIS OF ARG-227; 262-GLU-ASP-263; 316-LYS-ASP-317; 403-LYS-TYR-404 AND 428-ASP-GLU-429</scope>
    <scope>FUNCTION (MINOR CAPSID READTHROUGH PROTEIN)</scope>
</reference>
<reference key="5">
    <citation type="journal article" date="2010" name="Virology">
        <title>A reinvestigation provides no evidence for sugar residues on structural proteins of poleroviruses and argues against a role for glycosylation of virus structural proteins in aphid transmission.</title>
        <authorList>
            <person name="Revollon S."/>
            <person name="Strub J.M."/>
            <person name="Fitchette A.C."/>
            <person name="Wiss L."/>
            <person name="Gomord V."/>
            <person name="Van Dorsselaer A."/>
            <person name="Brault V."/>
        </authorList>
    </citation>
    <scope>ABSENCE OF GLYCOSYLATION (READTHROUGH PROTEIN P3-RTD)</scope>
    <scope>PROTEOLYTIC CLEAVAGE (READTHROUGH PROTEIN P3-RTD)</scope>
    <scope>FUNCTION (MINOR CAPSID READTHROUGH PROTEIN)</scope>
</reference>
<reference key="6">
    <citation type="journal article" date="2015" name="Virology">
        <title>A protein kinase binds the C-terminal domain of the readthrough protein of Turnip yellows virus and regulates virus accumulation.</title>
        <authorList>
            <person name="Rodriguez-Medina C."/>
            <person name="Boissinot S."/>
            <person name="Chapuis S."/>
            <person name="Gereige D."/>
            <person name="Rastegar M."/>
            <person name="Erdinger M."/>
            <person name="Revers F."/>
            <person name="Ziegler-Graff V."/>
            <person name="Brault V."/>
        </authorList>
    </citation>
    <scope>FUNCTION (MINOR CAPSID READTHROUGH PROTEIN)</scope>
</reference>
<evidence type="ECO:0000250" key="1">
    <source>
        <dbReference type="UniProtKB" id="P09516"/>
    </source>
</evidence>
<evidence type="ECO:0000250" key="2">
    <source>
        <dbReference type="UniProtKB" id="P17525"/>
    </source>
</evidence>
<evidence type="ECO:0000256" key="3">
    <source>
        <dbReference type="SAM" id="MobiDB-lite"/>
    </source>
</evidence>
<evidence type="ECO:0000269" key="4">
    <source>
    </source>
</evidence>
<evidence type="ECO:0000269" key="5">
    <source>
    </source>
</evidence>
<evidence type="ECO:0000269" key="6">
    <source>
    </source>
</evidence>
<evidence type="ECO:0000269" key="7">
    <source>
    </source>
</evidence>
<evidence type="ECO:0000269" key="8">
    <source>
    </source>
</evidence>
<evidence type="ECO:0000303" key="9">
    <source>
    </source>
</evidence>
<evidence type="ECO:0000305" key="10"/>
<evidence type="ECO:0007829" key="11">
    <source>
        <dbReference type="PDB" id="7ULN"/>
    </source>
</evidence>
<gene>
    <name type="ORF">ORF3/ORF5</name>
</gene>
<organism>
    <name type="scientific">Turnip yellows virus (isolate FL-1)</name>
    <name type="common">TuYV</name>
    <name type="synonym">BWYV-FL1</name>
    <dbReference type="NCBI Taxonomy" id="12043"/>
    <lineage>
        <taxon>Viruses</taxon>
        <taxon>Riboviria</taxon>
        <taxon>Orthornavirae</taxon>
        <taxon>Pisuviricota</taxon>
        <taxon>Pisoniviricetes</taxon>
        <taxon>Sobelivirales</taxon>
        <taxon>Solemoviridae</taxon>
        <taxon>Polerovirus</taxon>
        <taxon>Beet western yellows virus</taxon>
    </lineage>
</organism>
<proteinExistence type="evidence at protein level"/>
<protein>
    <recommendedName>
        <fullName>Readthrough protein P3-RTD</fullName>
    </recommendedName>
    <alternativeName>
        <fullName evidence="2">P3-P5 readthrough protein</fullName>
    </alternativeName>
    <alternativeName>
        <fullName>P74</fullName>
    </alternativeName>
    <alternativeName>
        <fullName>Readthrough protein</fullName>
        <shortName>RT protein</shortName>
    </alternativeName>
    <component>
        <recommendedName>
            <fullName evidence="9">Minor capsid readthrough protein</fullName>
            <shortName evidence="9">Minor capsid RT protein</shortName>
        </recommendedName>
        <alternativeName>
            <fullName>54 kDa protein</fullName>
        </alternativeName>
    </component>
    <component>
        <recommendedName>
            <fullName evidence="10">Cleaved product</fullName>
        </recommendedName>
    </component>
</protein>
<accession>P09514</accession>
<feature type="chain" id="PRO_0000222426" description="Readthrough protein P3-RTD">
    <location>
        <begin position="1"/>
        <end position="670"/>
    </location>
</feature>
<feature type="chain" id="PRO_0000455349" description="Minor capsid readthrough protein">
    <location>
        <begin position="1"/>
        <end position="437"/>
    </location>
</feature>
<feature type="chain" id="PRO_0000455350" description="Cleaved product">
    <location>
        <begin position="438"/>
        <end position="670"/>
    </location>
</feature>
<feature type="region of interest" description="Disordered" evidence="3">
    <location>
        <begin position="1"/>
        <end position="64"/>
    </location>
</feature>
<feature type="region of interest" description="Disordered" evidence="3">
    <location>
        <begin position="203"/>
        <end position="223"/>
    </location>
</feature>
<feature type="region of interest" description="Readthrough domain (RTD)">
    <location>
        <begin position="204"/>
        <end position="670"/>
    </location>
</feature>
<feature type="region of interest" description="Disordered" evidence="3">
    <location>
        <begin position="431"/>
        <end position="553"/>
    </location>
</feature>
<feature type="region of interest" description="Disordered" evidence="3">
    <location>
        <begin position="609"/>
        <end position="629"/>
    </location>
</feature>
<feature type="region of interest" description="Disordered" evidence="3">
    <location>
        <begin position="641"/>
        <end position="670"/>
    </location>
</feature>
<feature type="compositionally biased region" description="Basic residues" evidence="3">
    <location>
        <begin position="10"/>
        <end position="24"/>
    </location>
</feature>
<feature type="compositionally biased region" description="Low complexity" evidence="3">
    <location>
        <begin position="25"/>
        <end position="36"/>
    </location>
</feature>
<feature type="compositionally biased region" description="Basic residues" evidence="3">
    <location>
        <begin position="38"/>
        <end position="49"/>
    </location>
</feature>
<feature type="compositionally biased region" description="Low complexity" evidence="3">
    <location>
        <begin position="50"/>
        <end position="60"/>
    </location>
</feature>
<feature type="compositionally biased region" description="Pro residues" evidence="3">
    <location>
        <begin position="209"/>
        <end position="221"/>
    </location>
</feature>
<feature type="compositionally biased region" description="Polar residues" evidence="3">
    <location>
        <begin position="466"/>
        <end position="485"/>
    </location>
</feature>
<feature type="compositionally biased region" description="Pro residues" evidence="3">
    <location>
        <begin position="536"/>
        <end position="545"/>
    </location>
</feature>
<feature type="compositionally biased region" description="Low complexity" evidence="3">
    <location>
        <begin position="609"/>
        <end position="624"/>
    </location>
</feature>
<feature type="site" description="Cleavage" evidence="5">
    <location>
        <begin position="437"/>
        <end position="438"/>
    </location>
</feature>
<feature type="mutagenesis site" description="Complete loss of aphid transmission." evidence="4">
    <original>R</original>
    <variation>A</variation>
    <location>
        <position position="227"/>
    </location>
</feature>
<feature type="mutagenesis site" description="Complete loss of aphid transmission." evidence="4">
    <original>ED</original>
    <variation>A</variation>
    <location>
        <begin position="262"/>
        <end position="263"/>
    </location>
</feature>
<feature type="mutagenesis site" description="No effect on aphid transmission." evidence="4">
    <original>KD</original>
    <variation>A</variation>
    <location>
        <begin position="316"/>
        <end position="317"/>
    </location>
</feature>
<feature type="mutagenesis site" description="Complete loss of aphid transmission." evidence="4">
    <original>KY</original>
    <variation>A</variation>
    <location>
        <begin position="403"/>
        <end position="404"/>
    </location>
</feature>
<feature type="mutagenesis site" description="Almost complete loss of aphid transmission." evidence="4">
    <original>DE</original>
    <variation>A</variation>
    <location>
        <begin position="428"/>
        <end position="429"/>
    </location>
</feature>
<feature type="strand" evidence="11">
    <location>
        <begin position="228"/>
        <end position="233"/>
    </location>
</feature>
<feature type="strand" evidence="11">
    <location>
        <begin position="236"/>
        <end position="241"/>
    </location>
</feature>
<feature type="strand" evidence="11">
    <location>
        <begin position="256"/>
        <end position="262"/>
    </location>
</feature>
<feature type="strand" evidence="11">
    <location>
        <begin position="265"/>
        <end position="271"/>
    </location>
</feature>
<feature type="strand" evidence="11">
    <location>
        <begin position="273"/>
        <end position="278"/>
    </location>
</feature>
<feature type="strand" evidence="11">
    <location>
        <begin position="280"/>
        <end position="290"/>
    </location>
</feature>
<feature type="strand" evidence="11">
    <location>
        <begin position="293"/>
        <end position="305"/>
    </location>
</feature>
<feature type="strand" evidence="11">
    <location>
        <begin position="307"/>
        <end position="309"/>
    </location>
</feature>
<feature type="strand" evidence="11">
    <location>
        <begin position="319"/>
        <end position="323"/>
    </location>
</feature>
<feature type="strand" evidence="11">
    <location>
        <begin position="331"/>
        <end position="355"/>
    </location>
</feature>
<feature type="strand" evidence="11">
    <location>
        <begin position="371"/>
        <end position="384"/>
    </location>
</feature>
<feature type="strand" evidence="11">
    <location>
        <begin position="386"/>
        <end position="388"/>
    </location>
</feature>
<feature type="strand" evidence="11">
    <location>
        <begin position="390"/>
        <end position="394"/>
    </location>
</feature>
<feature type="helix" evidence="11">
    <location>
        <begin position="402"/>
        <end position="404"/>
    </location>
</feature>
<feature type="strand" evidence="11">
    <location>
        <begin position="414"/>
        <end position="419"/>
    </location>
</feature>
<feature type="strand" evidence="11">
    <location>
        <begin position="421"/>
        <end position="429"/>
    </location>
</feature>
<feature type="strand" evidence="11">
    <location>
        <begin position="450"/>
        <end position="452"/>
    </location>
</feature>
<dbReference type="EMBL" id="X13063">
    <property type="protein sequence ID" value="CAA31467.2"/>
    <property type="status" value="ALT_SEQ"/>
    <property type="molecule type" value="Genomic_RNA"/>
</dbReference>
<dbReference type="PIR" id="S01943">
    <property type="entry name" value="S01943"/>
</dbReference>
<dbReference type="RefSeq" id="NP_620487.1">
    <property type="nucleotide sequence ID" value="NC_003743.1"/>
</dbReference>
<dbReference type="PDB" id="7ULN">
    <property type="method" value="X-ray"/>
    <property type="resolution" value="1.53 A"/>
    <property type="chains" value="A/B=224-461"/>
</dbReference>
<dbReference type="PDB" id="9FHP">
    <property type="method" value="EM"/>
    <property type="resolution" value="4.08 A"/>
    <property type="chains" value="A/B/C=1-202"/>
</dbReference>
<dbReference type="PDBsum" id="7ULN"/>
<dbReference type="PDBsum" id="9FHP"/>
<dbReference type="EMDB" id="EMD-10003"/>
<dbReference type="SMR" id="P09514"/>
<dbReference type="KEGG" id="vg:940480"/>
<dbReference type="Proteomes" id="UP000007545">
    <property type="component" value="Segment"/>
</dbReference>
<dbReference type="GO" id="GO:0044229">
    <property type="term" value="C:host cell periplasmic space"/>
    <property type="evidence" value="ECO:0007669"/>
    <property type="project" value="UniProtKB-SubCell"/>
</dbReference>
<dbReference type="GO" id="GO:0044219">
    <property type="term" value="C:host cell plasmodesma"/>
    <property type="evidence" value="ECO:0007669"/>
    <property type="project" value="UniProtKB-SubCell"/>
</dbReference>
<dbReference type="GO" id="GO:0019028">
    <property type="term" value="C:viral capsid"/>
    <property type="evidence" value="ECO:0007669"/>
    <property type="project" value="UniProtKB-KW"/>
</dbReference>
<dbReference type="GO" id="GO:0005198">
    <property type="term" value="F:structural molecule activity"/>
    <property type="evidence" value="ECO:0007669"/>
    <property type="project" value="InterPro"/>
</dbReference>
<dbReference type="InterPro" id="IPR001517">
    <property type="entry name" value="Luteo_coat"/>
</dbReference>
<dbReference type="InterPro" id="IPR002929">
    <property type="entry name" value="PLrV_ORF5"/>
</dbReference>
<dbReference type="Pfam" id="PF00894">
    <property type="entry name" value="Luteo_coat"/>
    <property type="match status" value="1"/>
</dbReference>
<dbReference type="Pfam" id="PF01690">
    <property type="entry name" value="PLRV_ORF5"/>
    <property type="match status" value="1"/>
</dbReference>
<dbReference type="PRINTS" id="PR00910">
    <property type="entry name" value="LVIRUSORF6"/>
</dbReference>
<comment type="function">
    <molecule>Minor capsid readthrough protein</molecule>
    <text evidence="1 4 5 6 7">Minor component of the viral capsid involved in aphid transmission and virus accumulation in the host (PubMed:10627524, PubMed:20416918, PubMed:26402374, PubMed:7882968). Required for the virus to move through the aphid (By similarity). The RTD domain of the protein is exposed on the surface of the particle and determines the vector specificity and intestinal tropism in the aphid (PubMed:7882968).</text>
</comment>
<comment type="subcellular location">
    <molecule>Minor capsid readthrough protein</molecule>
    <subcellularLocation>
        <location evidence="2">Virion</location>
    </subcellularLocation>
    <subcellularLocation>
        <location evidence="2">Host cell junction</location>
        <location evidence="2">Host plasmodesma</location>
    </subcellularLocation>
    <subcellularLocation>
        <location evidence="2">Host periplasm</location>
    </subcellularLocation>
</comment>
<comment type="subcellular location">
    <molecule>Cleaved product</molecule>
    <subcellularLocation>
        <location evidence="2">Virion</location>
    </subcellularLocation>
</comment>
<comment type="domain">
    <molecule>Readthrough protein P3-RTD</molecule>
    <text evidence="1 8 10">The N-terminus is highly basic like those of many plant virus capsid proteins (Probable). These regions may be involved in protein-RNA interaction (Probable). The RTD N-terminus is responsible for aphid transmission and aphid endosymbiont interaction (PubMed:9143288). The readthrough domain is required for transport of virus through membranes of the aphid salivary glands (By similarity).</text>
</comment>
<comment type="PTM">
    <molecule>Readthrough protein P3-RTD</molecule>
    <text evidence="2 5">In virus particles, more than 200 amino acids are proteolytically cleaved releasing the C-terminus part of the RTD domain (PubMed:20416918). The cleaved product remains attached to the virus particle (By similarity).</text>
</comment>
<comment type="miscellaneous">
    <molecule>Readthrough protein P3-RTD</molecule>
    <text evidence="2">This protein is translated as a fusion protein by episodic readthrough of the major coat protein termination codon. It is composed of the major capsid protein fused to a long C-terminal extension called the readthrough domain (RTD). Readthrough of the terminator codon TAG occurs between the codons for 202-Lys and 204-Val.</text>
</comment>
<comment type="similarity">
    <text evidence="10">Belongs to the luteoviruses readthrough protein family.</text>
</comment>
<comment type="sequence caution" evidence="10">
    <conflict type="miscellaneous discrepancy">
        <sequence resource="EMBL-CDS" id="CAA31467"/>
    </conflict>
    <text>Readthrough of an in-frame TAG stop codon in position 203 translated as Tyr.</text>
</comment>
<name>MCAPS_TYYVF</name>
<organismHost>
    <name type="scientific">Beta vulgaris</name>
    <name type="common">Sugar beet</name>
    <dbReference type="NCBI Taxonomy" id="161934"/>
</organismHost>
<organismHost>
    <name type="scientific">Brassica napus subsp. rapifera</name>
    <dbReference type="NCBI Taxonomy" id="3709"/>
</organismHost>
<organismHost>
    <name type="scientific">Brassica napus var. napus</name>
    <dbReference type="NCBI Taxonomy" id="138011"/>
</organismHost>
<organismHost>
    <name type="scientific">Brassica nigra</name>
    <name type="common">Black mustard</name>
    <name type="synonym">Sinapis nigra</name>
    <dbReference type="NCBI Taxonomy" id="3710"/>
</organismHost>
<organismHost>
    <name type="scientific">Brassica oleracea var. botrytis</name>
    <name type="common">Cauliflower</name>
    <dbReference type="NCBI Taxonomy" id="3715"/>
</organismHost>
<organismHost>
    <name type="scientific">Brassica oleracea var. capitata</name>
    <name type="common">Cabbage</name>
    <dbReference type="NCBI Taxonomy" id="3716"/>
</organismHost>
<organismHost>
    <name type="scientific">Brassica rapa subsp. rapa</name>
    <name type="common">Turnip</name>
    <dbReference type="NCBI Taxonomy" id="51350"/>
</organismHost>
<organismHost>
    <name type="scientific">Capsicum annuum</name>
    <name type="common">Capsicum pepper</name>
    <dbReference type="NCBI Taxonomy" id="4072"/>
</organismHost>
<organismHost>
    <name type="scientific">Cicer arietinum</name>
    <name type="common">Chickpea</name>
    <name type="synonym">Garbanzo</name>
    <dbReference type="NCBI Taxonomy" id="3827"/>
</organismHost>
<organismHost>
    <name type="scientific">Citrullus lanatus</name>
    <name type="common">Watermelon</name>
    <name type="synonym">Citrullus vulgaris</name>
    <dbReference type="NCBI Taxonomy" id="3654"/>
</organismHost>
<organismHost>
    <name type="scientific">Crambe hispanica subsp. abyssinica</name>
    <name type="common">Abyssinian kale</name>
    <name type="synonym">Crambe abyssinica</name>
    <dbReference type="NCBI Taxonomy" id="3721"/>
</organismHost>
<organismHost>
    <name type="scientific">Cucumis sativus</name>
    <name type="common">Cucumber</name>
    <dbReference type="NCBI Taxonomy" id="3659"/>
</organismHost>
<organismHost>
    <name type="scientific">Cucurbita pepo</name>
    <name type="common">Vegetable marrow</name>
    <name type="synonym">Summer squash</name>
    <dbReference type="NCBI Taxonomy" id="3663"/>
</organismHost>
<organismHost>
    <name type="scientific">Glycine max</name>
    <name type="common">Soybean</name>
    <name type="synonym">Glycine hispida</name>
    <dbReference type="NCBI Taxonomy" id="3847"/>
</organismHost>
<organismHost>
    <name type="scientific">Helianthus annuus</name>
    <name type="common">Common sunflower</name>
    <dbReference type="NCBI Taxonomy" id="4232"/>
</organismHost>
<organismHost>
    <name type="scientific">Lactuca sativa</name>
    <name type="common">Garden lettuce</name>
    <dbReference type="NCBI Taxonomy" id="4236"/>
</organismHost>
<organismHost>
    <name type="scientific">Phlox drummondii</name>
    <name type="common">Annual phlox</name>
    <dbReference type="NCBI Taxonomy" id="103529"/>
</organismHost>
<organismHost>
    <name type="scientific">Pisum sativum</name>
    <name type="common">Garden pea</name>
    <name type="synonym">Lathyrus oleraceus</name>
    <dbReference type="NCBI Taxonomy" id="3888"/>
</organismHost>
<organismHost>
    <name type="scientific">Raphanus sativus</name>
    <name type="common">Radish</name>
    <name type="synonym">Raphanus raphanistrum var. sativus</name>
    <dbReference type="NCBI Taxonomy" id="3726"/>
</organismHost>
<organismHost>
    <name type="scientific">Solanum lycopersicum</name>
    <name type="common">Tomato</name>
    <name type="synonym">Lycopersicon esculentum</name>
    <dbReference type="NCBI Taxonomy" id="4081"/>
</organismHost>
<organismHost>
    <name type="scientific">Spinacia oleracea</name>
    <name type="common">Spinach</name>
    <dbReference type="NCBI Taxonomy" id="3562"/>
</organismHost>
<organismHost>
    <name type="scientific">Trifolium subterraneum</name>
    <name type="common">Subterranean clover</name>
    <dbReference type="NCBI Taxonomy" id="3900"/>
</organismHost>
<organismHost>
    <name type="scientific">Vicia faba</name>
    <name type="common">Broad bean</name>
    <name type="synonym">Faba vulgaris</name>
    <dbReference type="NCBI Taxonomy" id="3906"/>
</organismHost>